<proteinExistence type="inferred from homology"/>
<sequence>METVFDYNQIKEIIPHRQPFLLIDRVVEYEEGQRCVAIKQVSGNEPFFQGHFPDYAVMPGVLITEALAQTGAVALLNSEQNKGKIALFAGIDKCRFKRQVTPGDTLTLEVEITKMRGPIGKGTAKATVDGQLACSCELTFAIQDV</sequence>
<reference key="1">
    <citation type="journal article" date="2009" name="Appl. Environ. Microbiol.">
        <title>Genome analysis of the meat starter culture bacterium Staphylococcus carnosus TM300.</title>
        <authorList>
            <person name="Rosenstein R."/>
            <person name="Nerz C."/>
            <person name="Biswas L."/>
            <person name="Resch A."/>
            <person name="Raddatz G."/>
            <person name="Schuster S.C."/>
            <person name="Goetz F."/>
        </authorList>
    </citation>
    <scope>NUCLEOTIDE SEQUENCE [LARGE SCALE GENOMIC DNA]</scope>
    <source>
        <strain>TM300</strain>
    </source>
</reference>
<name>FABZ_STACT</name>
<gene>
    <name evidence="1" type="primary">fabZ</name>
    <name type="ordered locus">Sca_1602</name>
</gene>
<keyword id="KW-0963">Cytoplasm</keyword>
<keyword id="KW-0441">Lipid A biosynthesis</keyword>
<keyword id="KW-0444">Lipid biosynthesis</keyword>
<keyword id="KW-0443">Lipid metabolism</keyword>
<keyword id="KW-0456">Lyase</keyword>
<keyword id="KW-1185">Reference proteome</keyword>
<comment type="function">
    <text evidence="1">Involved in unsaturated fatty acids biosynthesis. Catalyzes the dehydration of short chain beta-hydroxyacyl-ACPs and long chain saturated and unsaturated beta-hydroxyacyl-ACPs.</text>
</comment>
<comment type="catalytic activity">
    <reaction evidence="1">
        <text>a (3R)-hydroxyacyl-[ACP] = a (2E)-enoyl-[ACP] + H2O</text>
        <dbReference type="Rhea" id="RHEA:13097"/>
        <dbReference type="Rhea" id="RHEA-COMP:9925"/>
        <dbReference type="Rhea" id="RHEA-COMP:9945"/>
        <dbReference type="ChEBI" id="CHEBI:15377"/>
        <dbReference type="ChEBI" id="CHEBI:78784"/>
        <dbReference type="ChEBI" id="CHEBI:78827"/>
        <dbReference type="EC" id="4.2.1.59"/>
    </reaction>
</comment>
<comment type="subcellular location">
    <subcellularLocation>
        <location evidence="1">Cytoplasm</location>
    </subcellularLocation>
</comment>
<comment type="similarity">
    <text evidence="1">Belongs to the thioester dehydratase family. FabZ subfamily.</text>
</comment>
<organism>
    <name type="scientific">Staphylococcus carnosus (strain TM300)</name>
    <dbReference type="NCBI Taxonomy" id="396513"/>
    <lineage>
        <taxon>Bacteria</taxon>
        <taxon>Bacillati</taxon>
        <taxon>Bacillota</taxon>
        <taxon>Bacilli</taxon>
        <taxon>Bacillales</taxon>
        <taxon>Staphylococcaceae</taxon>
        <taxon>Staphylococcus</taxon>
    </lineage>
</organism>
<protein>
    <recommendedName>
        <fullName evidence="1">3-hydroxyacyl-[acyl-carrier-protein] dehydratase FabZ</fullName>
        <ecNumber evidence="1">4.2.1.59</ecNumber>
    </recommendedName>
    <alternativeName>
        <fullName evidence="1">(3R)-hydroxymyristoyl-[acyl-carrier-protein] dehydratase</fullName>
        <shortName evidence="1">(3R)-hydroxymyristoyl-ACP dehydrase</shortName>
    </alternativeName>
    <alternativeName>
        <fullName evidence="1">Beta-hydroxyacyl-ACP dehydratase</fullName>
    </alternativeName>
</protein>
<feature type="chain" id="PRO_1000134710" description="3-hydroxyacyl-[acyl-carrier-protein] dehydratase FabZ">
    <location>
        <begin position="1"/>
        <end position="145"/>
    </location>
</feature>
<feature type="active site" evidence="1">
    <location>
        <position position="51"/>
    </location>
</feature>
<dbReference type="EC" id="4.2.1.59" evidence="1"/>
<dbReference type="EMBL" id="AM295250">
    <property type="protein sequence ID" value="CAL28508.1"/>
    <property type="molecule type" value="Genomic_DNA"/>
</dbReference>
<dbReference type="RefSeq" id="WP_015900848.1">
    <property type="nucleotide sequence ID" value="NC_012121.1"/>
</dbReference>
<dbReference type="SMR" id="B9DMG5"/>
<dbReference type="GeneID" id="93794056"/>
<dbReference type="KEGG" id="sca:SCA_1602"/>
<dbReference type="eggNOG" id="COG0764">
    <property type="taxonomic scope" value="Bacteria"/>
</dbReference>
<dbReference type="HOGENOM" id="CLU_078912_3_0_9"/>
<dbReference type="OrthoDB" id="9772788at2"/>
<dbReference type="BioCyc" id="SCAR396513:SCA_RS08135-MONOMER"/>
<dbReference type="Proteomes" id="UP000000444">
    <property type="component" value="Chromosome"/>
</dbReference>
<dbReference type="GO" id="GO:0005737">
    <property type="term" value="C:cytoplasm"/>
    <property type="evidence" value="ECO:0007669"/>
    <property type="project" value="UniProtKB-SubCell"/>
</dbReference>
<dbReference type="GO" id="GO:0016020">
    <property type="term" value="C:membrane"/>
    <property type="evidence" value="ECO:0007669"/>
    <property type="project" value="GOC"/>
</dbReference>
<dbReference type="GO" id="GO:0019171">
    <property type="term" value="F:(3R)-hydroxyacyl-[acyl-carrier-protein] dehydratase activity"/>
    <property type="evidence" value="ECO:0007669"/>
    <property type="project" value="UniProtKB-EC"/>
</dbReference>
<dbReference type="GO" id="GO:0006633">
    <property type="term" value="P:fatty acid biosynthetic process"/>
    <property type="evidence" value="ECO:0007669"/>
    <property type="project" value="UniProtKB-UniRule"/>
</dbReference>
<dbReference type="GO" id="GO:0009245">
    <property type="term" value="P:lipid A biosynthetic process"/>
    <property type="evidence" value="ECO:0007669"/>
    <property type="project" value="UniProtKB-UniRule"/>
</dbReference>
<dbReference type="CDD" id="cd01288">
    <property type="entry name" value="FabZ"/>
    <property type="match status" value="1"/>
</dbReference>
<dbReference type="FunFam" id="3.10.129.10:FF:000001">
    <property type="entry name" value="3-hydroxyacyl-[acyl-carrier-protein] dehydratase FabZ"/>
    <property type="match status" value="1"/>
</dbReference>
<dbReference type="Gene3D" id="3.10.129.10">
    <property type="entry name" value="Hotdog Thioesterase"/>
    <property type="match status" value="1"/>
</dbReference>
<dbReference type="HAMAP" id="MF_00406">
    <property type="entry name" value="FabZ"/>
    <property type="match status" value="1"/>
</dbReference>
<dbReference type="InterPro" id="IPR013114">
    <property type="entry name" value="FabA_FabZ"/>
</dbReference>
<dbReference type="InterPro" id="IPR010084">
    <property type="entry name" value="FabZ"/>
</dbReference>
<dbReference type="InterPro" id="IPR029069">
    <property type="entry name" value="HotDog_dom_sf"/>
</dbReference>
<dbReference type="NCBIfam" id="TIGR01750">
    <property type="entry name" value="fabZ"/>
    <property type="match status" value="1"/>
</dbReference>
<dbReference type="NCBIfam" id="NF000582">
    <property type="entry name" value="PRK00006.1"/>
    <property type="match status" value="1"/>
</dbReference>
<dbReference type="PANTHER" id="PTHR30272">
    <property type="entry name" value="3-HYDROXYACYL-[ACYL-CARRIER-PROTEIN] DEHYDRATASE"/>
    <property type="match status" value="1"/>
</dbReference>
<dbReference type="PANTHER" id="PTHR30272:SF1">
    <property type="entry name" value="3-HYDROXYACYL-[ACYL-CARRIER-PROTEIN] DEHYDRATASE"/>
    <property type="match status" value="1"/>
</dbReference>
<dbReference type="Pfam" id="PF07977">
    <property type="entry name" value="FabA"/>
    <property type="match status" value="1"/>
</dbReference>
<dbReference type="SUPFAM" id="SSF54637">
    <property type="entry name" value="Thioesterase/thiol ester dehydrase-isomerase"/>
    <property type="match status" value="1"/>
</dbReference>
<accession>B9DMG5</accession>
<evidence type="ECO:0000255" key="1">
    <source>
        <dbReference type="HAMAP-Rule" id="MF_00406"/>
    </source>
</evidence>